<name>NUSB_ANAD2</name>
<sequence>MTSRRTRARERALQALYQIDVAAEGIDDALSRFWKSFEPVEREVMDLAEGLVRGVAQHRRAVDEAIEAVSTNWRLDRMAKVDRNVLRLAVFELLRTDVPVKVVINEAIELGKKYGSESSGAFVNGVLDKVASGLPPARRGER</sequence>
<protein>
    <recommendedName>
        <fullName evidence="1">Transcription antitermination protein NusB</fullName>
    </recommendedName>
    <alternativeName>
        <fullName evidence="1">Antitermination factor NusB</fullName>
    </alternativeName>
</protein>
<organism>
    <name type="scientific">Anaeromyxobacter dehalogenans (strain 2CP-1 / ATCC BAA-258)</name>
    <dbReference type="NCBI Taxonomy" id="455488"/>
    <lineage>
        <taxon>Bacteria</taxon>
        <taxon>Pseudomonadati</taxon>
        <taxon>Myxococcota</taxon>
        <taxon>Myxococcia</taxon>
        <taxon>Myxococcales</taxon>
        <taxon>Cystobacterineae</taxon>
        <taxon>Anaeromyxobacteraceae</taxon>
        <taxon>Anaeromyxobacter</taxon>
    </lineage>
</organism>
<evidence type="ECO:0000255" key="1">
    <source>
        <dbReference type="HAMAP-Rule" id="MF_00073"/>
    </source>
</evidence>
<proteinExistence type="inferred from homology"/>
<accession>B8JEW3</accession>
<dbReference type="EMBL" id="CP001359">
    <property type="protein sequence ID" value="ACL66259.1"/>
    <property type="molecule type" value="Genomic_DNA"/>
</dbReference>
<dbReference type="RefSeq" id="WP_011421790.1">
    <property type="nucleotide sequence ID" value="NC_011891.1"/>
</dbReference>
<dbReference type="SMR" id="B8JEW3"/>
<dbReference type="KEGG" id="acp:A2cp1_2922"/>
<dbReference type="HOGENOM" id="CLU_087843_3_3_7"/>
<dbReference type="Proteomes" id="UP000007089">
    <property type="component" value="Chromosome"/>
</dbReference>
<dbReference type="GO" id="GO:0005829">
    <property type="term" value="C:cytosol"/>
    <property type="evidence" value="ECO:0007669"/>
    <property type="project" value="TreeGrafter"/>
</dbReference>
<dbReference type="GO" id="GO:0003723">
    <property type="term" value="F:RNA binding"/>
    <property type="evidence" value="ECO:0007669"/>
    <property type="project" value="UniProtKB-UniRule"/>
</dbReference>
<dbReference type="GO" id="GO:0006353">
    <property type="term" value="P:DNA-templated transcription termination"/>
    <property type="evidence" value="ECO:0007669"/>
    <property type="project" value="UniProtKB-UniRule"/>
</dbReference>
<dbReference type="GO" id="GO:0031564">
    <property type="term" value="P:transcription antitermination"/>
    <property type="evidence" value="ECO:0007669"/>
    <property type="project" value="UniProtKB-KW"/>
</dbReference>
<dbReference type="CDD" id="cd00619">
    <property type="entry name" value="Terminator_NusB"/>
    <property type="match status" value="1"/>
</dbReference>
<dbReference type="Gene3D" id="1.10.940.10">
    <property type="entry name" value="NusB-like"/>
    <property type="match status" value="1"/>
</dbReference>
<dbReference type="HAMAP" id="MF_00073">
    <property type="entry name" value="NusB"/>
    <property type="match status" value="1"/>
</dbReference>
<dbReference type="InterPro" id="IPR035926">
    <property type="entry name" value="NusB-like_sf"/>
</dbReference>
<dbReference type="InterPro" id="IPR011605">
    <property type="entry name" value="NusB_fam"/>
</dbReference>
<dbReference type="InterPro" id="IPR006027">
    <property type="entry name" value="NusB_RsmB_TIM44"/>
</dbReference>
<dbReference type="NCBIfam" id="TIGR01951">
    <property type="entry name" value="nusB"/>
    <property type="match status" value="1"/>
</dbReference>
<dbReference type="PANTHER" id="PTHR11078:SF3">
    <property type="entry name" value="ANTITERMINATION NUSB DOMAIN-CONTAINING PROTEIN"/>
    <property type="match status" value="1"/>
</dbReference>
<dbReference type="PANTHER" id="PTHR11078">
    <property type="entry name" value="N UTILIZATION SUBSTANCE PROTEIN B-RELATED"/>
    <property type="match status" value="1"/>
</dbReference>
<dbReference type="Pfam" id="PF01029">
    <property type="entry name" value="NusB"/>
    <property type="match status" value="1"/>
</dbReference>
<dbReference type="SUPFAM" id="SSF48013">
    <property type="entry name" value="NusB-like"/>
    <property type="match status" value="1"/>
</dbReference>
<keyword id="KW-0694">RNA-binding</keyword>
<keyword id="KW-0804">Transcription</keyword>
<keyword id="KW-0889">Transcription antitermination</keyword>
<keyword id="KW-0805">Transcription regulation</keyword>
<feature type="chain" id="PRO_1000118108" description="Transcription antitermination protein NusB">
    <location>
        <begin position="1"/>
        <end position="142"/>
    </location>
</feature>
<comment type="function">
    <text evidence="1">Involved in transcription antitermination. Required for transcription of ribosomal RNA (rRNA) genes. Binds specifically to the boxA antiterminator sequence of the ribosomal RNA (rrn) operons.</text>
</comment>
<comment type="similarity">
    <text evidence="1">Belongs to the NusB family.</text>
</comment>
<reference key="1">
    <citation type="submission" date="2009-01" db="EMBL/GenBank/DDBJ databases">
        <title>Complete sequence of Anaeromyxobacter dehalogenans 2CP-1.</title>
        <authorList>
            <person name="Lucas S."/>
            <person name="Copeland A."/>
            <person name="Lapidus A."/>
            <person name="Glavina del Rio T."/>
            <person name="Dalin E."/>
            <person name="Tice H."/>
            <person name="Bruce D."/>
            <person name="Goodwin L."/>
            <person name="Pitluck S."/>
            <person name="Saunders E."/>
            <person name="Brettin T."/>
            <person name="Detter J.C."/>
            <person name="Han C."/>
            <person name="Larimer F."/>
            <person name="Land M."/>
            <person name="Hauser L."/>
            <person name="Kyrpides N."/>
            <person name="Ovchinnikova G."/>
            <person name="Beliaev A.S."/>
            <person name="Richardson P."/>
        </authorList>
    </citation>
    <scope>NUCLEOTIDE SEQUENCE [LARGE SCALE GENOMIC DNA]</scope>
    <source>
        <strain>2CP-1 / ATCC BAA-258</strain>
    </source>
</reference>
<gene>
    <name evidence="1" type="primary">nusB</name>
    <name type="ordered locus">A2cp1_2922</name>
</gene>